<keyword id="KW-0106">Calcium</keyword>
<keyword id="KW-0130">Cell adhesion</keyword>
<keyword id="KW-1003">Cell membrane</keyword>
<keyword id="KW-1015">Disulfide bond</keyword>
<keyword id="KW-0245">EGF-like domain</keyword>
<keyword id="KW-0325">Glycoprotein</keyword>
<keyword id="KW-0472">Membrane</keyword>
<keyword id="KW-0496">Mitochondrion</keyword>
<keyword id="KW-0597">Phosphoprotein</keyword>
<keyword id="KW-0675">Receptor</keyword>
<keyword id="KW-1185">Reference proteome</keyword>
<keyword id="KW-0677">Repeat</keyword>
<keyword id="KW-0732">Signal</keyword>
<keyword id="KW-0812">Transmembrane</keyword>
<keyword id="KW-1133">Transmembrane helix</keyword>
<evidence type="ECO:0000250" key="1"/>
<evidence type="ECO:0000255" key="2"/>
<evidence type="ECO:0000255" key="3">
    <source>
        <dbReference type="PROSITE-ProRule" id="PRU00043"/>
    </source>
</evidence>
<evidence type="ECO:0000255" key="4">
    <source>
        <dbReference type="PROSITE-ProRule" id="PRU00076"/>
    </source>
</evidence>
<evidence type="ECO:0000255" key="5">
    <source>
        <dbReference type="PROSITE-ProRule" id="PRU00122"/>
    </source>
</evidence>
<evidence type="ECO:0000256" key="6">
    <source>
        <dbReference type="SAM" id="MobiDB-lite"/>
    </source>
</evidence>
<evidence type="ECO:0000269" key="7">
    <source>
    </source>
</evidence>
<evidence type="ECO:0000269" key="8">
    <source>
    </source>
</evidence>
<evidence type="ECO:0000269" key="9">
    <source>
    </source>
</evidence>
<evidence type="ECO:0000269" key="10">
    <source>
    </source>
</evidence>
<evidence type="ECO:0000269" key="11">
    <source>
    </source>
</evidence>
<evidence type="ECO:0000269" key="12">
    <source>
    </source>
</evidence>
<evidence type="ECO:0000269" key="13">
    <source>
    </source>
</evidence>
<evidence type="ECO:0000269" key="14">
    <source>
    </source>
</evidence>
<evidence type="ECO:0000269" key="15">
    <source>
    </source>
</evidence>
<evidence type="ECO:0000269" key="16">
    <source>
    </source>
</evidence>
<evidence type="ECO:0000269" key="17">
    <source>
    </source>
</evidence>
<evidence type="ECO:0000269" key="18">
    <source>
    </source>
</evidence>
<evidence type="ECO:0000269" key="19">
    <source>
    </source>
</evidence>
<evidence type="ECO:0000305" key="20"/>
<evidence type="ECO:0000305" key="21">
    <source>
    </source>
</evidence>
<evidence type="ECO:0000312" key="22">
    <source>
        <dbReference type="FlyBase" id="FBgn0001075"/>
    </source>
</evidence>
<protein>
    <recommendedName>
        <fullName>Cadherin-related tumor suppressor</fullName>
    </recommendedName>
    <alternativeName>
        <fullName>Protein fat</fullName>
    </alternativeName>
    <component>
        <recommendedName>
            <fullName evidence="21">Ft-mito</fullName>
        </recommendedName>
    </component>
</protein>
<organism>
    <name type="scientific">Drosophila melanogaster</name>
    <name type="common">Fruit fly</name>
    <dbReference type="NCBI Taxonomy" id="7227"/>
    <lineage>
        <taxon>Eukaryota</taxon>
        <taxon>Metazoa</taxon>
        <taxon>Ecdysozoa</taxon>
        <taxon>Arthropoda</taxon>
        <taxon>Hexapoda</taxon>
        <taxon>Insecta</taxon>
        <taxon>Pterygota</taxon>
        <taxon>Neoptera</taxon>
        <taxon>Endopterygota</taxon>
        <taxon>Diptera</taxon>
        <taxon>Brachycera</taxon>
        <taxon>Muscomorpha</taxon>
        <taxon>Ephydroidea</taxon>
        <taxon>Drosophilidae</taxon>
        <taxon>Drosophila</taxon>
        <taxon>Sophophora</taxon>
    </lineage>
</organism>
<dbReference type="EMBL" id="M80537">
    <property type="protein sequence ID" value="AAA28530.1"/>
    <property type="molecule type" value="Genomic_DNA"/>
</dbReference>
<dbReference type="EMBL" id="AE014134">
    <property type="protein sequence ID" value="AAF51036.1"/>
    <property type="molecule type" value="Genomic_DNA"/>
</dbReference>
<dbReference type="PIR" id="A41087">
    <property type="entry name" value="IJFFTM"/>
</dbReference>
<dbReference type="RefSeq" id="NP_477497.1">
    <property type="nucleotide sequence ID" value="NM_058149.4"/>
</dbReference>
<dbReference type="SMR" id="P33450"/>
<dbReference type="BioGRID" id="59824">
    <property type="interactions" value="76"/>
</dbReference>
<dbReference type="DIP" id="DIP-21094N"/>
<dbReference type="FunCoup" id="P33450">
    <property type="interactions" value="194"/>
</dbReference>
<dbReference type="IntAct" id="P33450">
    <property type="interactions" value="52"/>
</dbReference>
<dbReference type="STRING" id="7227.FBpp0077167"/>
<dbReference type="GlyCosmos" id="P33450">
    <property type="glycosylation" value="38 sites, No reported glycans"/>
</dbReference>
<dbReference type="GlyGen" id="P33450">
    <property type="glycosylation" value="40 sites"/>
</dbReference>
<dbReference type="iPTMnet" id="P33450"/>
<dbReference type="SwissPalm" id="P33450"/>
<dbReference type="PaxDb" id="7227-FBpp0077167"/>
<dbReference type="EnsemblMetazoa" id="FBtr0077478">
    <property type="protein sequence ID" value="FBpp0077167"/>
    <property type="gene ID" value="FBgn0001075"/>
</dbReference>
<dbReference type="GeneID" id="33627"/>
<dbReference type="KEGG" id="dme:Dmel_CG3352"/>
<dbReference type="AGR" id="FB:FBgn0001075"/>
<dbReference type="CTD" id="33627"/>
<dbReference type="FlyBase" id="FBgn0001075">
    <property type="gene designation" value="ft"/>
</dbReference>
<dbReference type="VEuPathDB" id="VectorBase:FBgn0001075"/>
<dbReference type="eggNOG" id="KOG1219">
    <property type="taxonomic scope" value="Eukaryota"/>
</dbReference>
<dbReference type="HOGENOM" id="CLU_000042_1_0_1"/>
<dbReference type="InParanoid" id="P33450"/>
<dbReference type="OMA" id="AGGMRKY"/>
<dbReference type="OrthoDB" id="6252479at2759"/>
<dbReference type="PhylomeDB" id="P33450"/>
<dbReference type="Reactome" id="R-DME-350379">
    <property type="pathway name" value="Homo-/heterophilic binding of transmembrane components"/>
</dbReference>
<dbReference type="Reactome" id="R-DME-390023">
    <property type="pathway name" value="Subcellular localisation of D"/>
</dbReference>
<dbReference type="Reactome" id="R-DME-390150">
    <property type="pathway name" value="DS ligand bound to FT receptor"/>
</dbReference>
<dbReference type="SignaLink" id="P33450"/>
<dbReference type="BioGRID-ORCS" id="33627">
    <property type="hits" value="0 hits in 1 CRISPR screen"/>
</dbReference>
<dbReference type="GenomeRNAi" id="33627"/>
<dbReference type="PRO" id="PR:P33450"/>
<dbReference type="Proteomes" id="UP000000803">
    <property type="component" value="Chromosome 2L"/>
</dbReference>
<dbReference type="Bgee" id="FBgn0001075">
    <property type="expression patterns" value="Expressed in wing disc and 70 other cell types or tissues"/>
</dbReference>
<dbReference type="ExpressionAtlas" id="P33450">
    <property type="expression patterns" value="baseline and differential"/>
</dbReference>
<dbReference type="GO" id="GO:0016324">
    <property type="term" value="C:apical plasma membrane"/>
    <property type="evidence" value="ECO:0007669"/>
    <property type="project" value="UniProtKB-SubCell"/>
</dbReference>
<dbReference type="GO" id="GO:0016327">
    <property type="term" value="C:apicolateral plasma membrane"/>
    <property type="evidence" value="ECO:0000314"/>
    <property type="project" value="FlyBase"/>
</dbReference>
<dbReference type="GO" id="GO:0005739">
    <property type="term" value="C:mitochondrion"/>
    <property type="evidence" value="ECO:0007669"/>
    <property type="project" value="UniProtKB-SubCell"/>
</dbReference>
<dbReference type="GO" id="GO:0005886">
    <property type="term" value="C:plasma membrane"/>
    <property type="evidence" value="ECO:0000314"/>
    <property type="project" value="FlyBase"/>
</dbReference>
<dbReference type="GO" id="GO:0045296">
    <property type="term" value="F:cadherin binding"/>
    <property type="evidence" value="ECO:0000353"/>
    <property type="project" value="FlyBase"/>
</dbReference>
<dbReference type="GO" id="GO:0005509">
    <property type="term" value="F:calcium ion binding"/>
    <property type="evidence" value="ECO:0000314"/>
    <property type="project" value="FlyBase"/>
</dbReference>
<dbReference type="GO" id="GO:0016339">
    <property type="term" value="P:calcium-dependent cell-cell adhesion via plasma membrane cell adhesion molecules"/>
    <property type="evidence" value="ECO:0000314"/>
    <property type="project" value="FlyBase"/>
</dbReference>
<dbReference type="GO" id="GO:0098609">
    <property type="term" value="P:cell-cell adhesion"/>
    <property type="evidence" value="ECO:0000315"/>
    <property type="project" value="FlyBase"/>
</dbReference>
<dbReference type="GO" id="GO:0044331">
    <property type="term" value="P:cell-cell adhesion mediated by cadherin"/>
    <property type="evidence" value="ECO:0000314"/>
    <property type="project" value="FlyBase"/>
</dbReference>
<dbReference type="GO" id="GO:0045317">
    <property type="term" value="P:equator specification"/>
    <property type="evidence" value="ECO:0000315"/>
    <property type="project" value="UniProtKB"/>
</dbReference>
<dbReference type="GO" id="GO:0048105">
    <property type="term" value="P:establishment of body hair planar orientation"/>
    <property type="evidence" value="ECO:0000315"/>
    <property type="project" value="FlyBase"/>
</dbReference>
<dbReference type="GO" id="GO:0001737">
    <property type="term" value="P:establishment of imaginal disc-derived wing hair orientation"/>
    <property type="evidence" value="ECO:0000315"/>
    <property type="project" value="FlyBase"/>
</dbReference>
<dbReference type="GO" id="GO:0042067">
    <property type="term" value="P:establishment of ommatidial planar polarity"/>
    <property type="evidence" value="ECO:0000315"/>
    <property type="project" value="UniProtKB"/>
</dbReference>
<dbReference type="GO" id="GO:0001736">
    <property type="term" value="P:establishment of planar polarity"/>
    <property type="evidence" value="ECO:0000315"/>
    <property type="project" value="FlyBase"/>
</dbReference>
<dbReference type="GO" id="GO:0007164">
    <property type="term" value="P:establishment of tissue polarity"/>
    <property type="evidence" value="ECO:0000315"/>
    <property type="project" value="FlyBase"/>
</dbReference>
<dbReference type="GO" id="GO:0016336">
    <property type="term" value="P:establishment or maintenance of polarity of larval imaginal disc epithelium"/>
    <property type="evidence" value="ECO:0000315"/>
    <property type="project" value="UniProtKB"/>
</dbReference>
<dbReference type="GO" id="GO:0007157">
    <property type="term" value="P:heterophilic cell-cell adhesion via plasma membrane cell adhesion molecules"/>
    <property type="evidence" value="ECO:0000353"/>
    <property type="project" value="FlyBase"/>
</dbReference>
<dbReference type="GO" id="GO:0007156">
    <property type="term" value="P:homophilic cell adhesion via plasma membrane adhesion molecules"/>
    <property type="evidence" value="ECO:0007669"/>
    <property type="project" value="InterPro"/>
</dbReference>
<dbReference type="GO" id="GO:0007446">
    <property type="term" value="P:imaginal disc growth"/>
    <property type="evidence" value="ECO:0000315"/>
    <property type="project" value="FlyBase"/>
</dbReference>
<dbReference type="GO" id="GO:0007447">
    <property type="term" value="P:imaginal disc pattern formation"/>
    <property type="evidence" value="ECO:0000315"/>
    <property type="project" value="UniProtKB"/>
</dbReference>
<dbReference type="GO" id="GO:0007476">
    <property type="term" value="P:imaginal disc-derived wing morphogenesis"/>
    <property type="evidence" value="ECO:0000315"/>
    <property type="project" value="UniProtKB"/>
</dbReference>
<dbReference type="GO" id="GO:0090176">
    <property type="term" value="P:microtubule cytoskeleton organization involved in establishment of planar polarity"/>
    <property type="evidence" value="ECO:0000315"/>
    <property type="project" value="FlyBase"/>
</dbReference>
<dbReference type="GO" id="GO:0008285">
    <property type="term" value="P:negative regulation of cell population proliferation"/>
    <property type="evidence" value="ECO:0000315"/>
    <property type="project" value="UniProtKB"/>
</dbReference>
<dbReference type="GO" id="GO:0010629">
    <property type="term" value="P:negative regulation of gene expression"/>
    <property type="evidence" value="ECO:0000315"/>
    <property type="project" value="UniProtKB"/>
</dbReference>
<dbReference type="GO" id="GO:0045926">
    <property type="term" value="P:negative regulation of growth"/>
    <property type="evidence" value="ECO:0000315"/>
    <property type="project" value="FlyBase"/>
</dbReference>
<dbReference type="GO" id="GO:0045571">
    <property type="term" value="P:negative regulation of imaginal disc growth"/>
    <property type="evidence" value="ECO:0000315"/>
    <property type="project" value="FlyBase"/>
</dbReference>
<dbReference type="GO" id="GO:0046621">
    <property type="term" value="P:negative regulation of organ growth"/>
    <property type="evidence" value="ECO:0000315"/>
    <property type="project" value="FlyBase"/>
</dbReference>
<dbReference type="GO" id="GO:0043065">
    <property type="term" value="P:positive regulation of apoptotic process"/>
    <property type="evidence" value="ECO:0000315"/>
    <property type="project" value="FlyBase"/>
</dbReference>
<dbReference type="GO" id="GO:0035332">
    <property type="term" value="P:positive regulation of hippo signaling"/>
    <property type="evidence" value="ECO:0000315"/>
    <property type="project" value="FlyBase"/>
</dbReference>
<dbReference type="GO" id="GO:0090251">
    <property type="term" value="P:protein localization involved in establishment of planar polarity"/>
    <property type="evidence" value="ECO:0000315"/>
    <property type="project" value="FlyBase"/>
</dbReference>
<dbReference type="GO" id="GO:0035209">
    <property type="term" value="P:pupal development"/>
    <property type="evidence" value="ECO:0000315"/>
    <property type="project" value="UniProtKB"/>
</dbReference>
<dbReference type="GO" id="GO:0090175">
    <property type="term" value="P:regulation of establishment of planar polarity"/>
    <property type="evidence" value="ECO:0000315"/>
    <property type="project" value="FlyBase"/>
</dbReference>
<dbReference type="GO" id="GO:0040008">
    <property type="term" value="P:regulation of growth"/>
    <property type="evidence" value="ECO:0000315"/>
    <property type="project" value="FlyBase"/>
</dbReference>
<dbReference type="GO" id="GO:0045570">
    <property type="term" value="P:regulation of imaginal disc growth"/>
    <property type="evidence" value="ECO:0000315"/>
    <property type="project" value="UniProtKB"/>
</dbReference>
<dbReference type="GO" id="GO:0032880">
    <property type="term" value="P:regulation of protein localization"/>
    <property type="evidence" value="ECO:0000315"/>
    <property type="project" value="FlyBase"/>
</dbReference>
<dbReference type="GO" id="GO:0035159">
    <property type="term" value="P:regulation of tube length, open tracheal system"/>
    <property type="evidence" value="ECO:0000315"/>
    <property type="project" value="FlyBase"/>
</dbReference>
<dbReference type="GO" id="GO:0009888">
    <property type="term" value="P:tissue development"/>
    <property type="evidence" value="ECO:0000315"/>
    <property type="project" value="UniProtKB"/>
</dbReference>
<dbReference type="GO" id="GO:0035220">
    <property type="term" value="P:wing disc development"/>
    <property type="evidence" value="ECO:0000315"/>
    <property type="project" value="UniProtKB"/>
</dbReference>
<dbReference type="CDD" id="cd11304">
    <property type="entry name" value="Cadherin_repeat"/>
    <property type="match status" value="34"/>
</dbReference>
<dbReference type="CDD" id="cd00054">
    <property type="entry name" value="EGF_CA"/>
    <property type="match status" value="3"/>
</dbReference>
<dbReference type="CDD" id="cd00110">
    <property type="entry name" value="LamG"/>
    <property type="match status" value="2"/>
</dbReference>
<dbReference type="FunFam" id="2.60.40.60:FF:000013">
    <property type="entry name" value="Cadherin EGF LAG seven-pass G-type receptor"/>
    <property type="match status" value="2"/>
</dbReference>
<dbReference type="FunFam" id="2.60.40.60:FF:000029">
    <property type="entry name" value="Cadherin EGF LAG seven-pass G-type receptor 3"/>
    <property type="match status" value="1"/>
</dbReference>
<dbReference type="FunFam" id="2.10.25.10:FF:000592">
    <property type="entry name" value="Cadherin-related tumor suppressor"/>
    <property type="match status" value="1"/>
</dbReference>
<dbReference type="FunFam" id="2.10.25.10:FF:000768">
    <property type="entry name" value="Cadherin-related tumor suppressor"/>
    <property type="match status" value="1"/>
</dbReference>
<dbReference type="FunFam" id="2.60.120.200:FF:000207">
    <property type="entry name" value="Cadherin-related tumor suppressor"/>
    <property type="match status" value="1"/>
</dbReference>
<dbReference type="FunFam" id="2.60.120.200:FF:000263">
    <property type="entry name" value="Cadherin-related tumor suppressor"/>
    <property type="match status" value="1"/>
</dbReference>
<dbReference type="FunFam" id="2.60.40.60:FF:000286">
    <property type="entry name" value="Cadherin-related tumor suppressor"/>
    <property type="match status" value="1"/>
</dbReference>
<dbReference type="FunFam" id="2.60.40.60:FF:000321">
    <property type="entry name" value="Cadherin-related tumor suppressor"/>
    <property type="match status" value="1"/>
</dbReference>
<dbReference type="FunFam" id="2.60.40.60:FF:000329">
    <property type="entry name" value="Cadherin-related tumor suppressor"/>
    <property type="match status" value="1"/>
</dbReference>
<dbReference type="FunFam" id="2.60.40.60:FF:000447">
    <property type="entry name" value="Cadherin-related tumor suppressor"/>
    <property type="match status" value="1"/>
</dbReference>
<dbReference type="FunFam" id="2.10.25.10:FF:000594">
    <property type="entry name" value="cadherin-related tumor suppressor"/>
    <property type="match status" value="1"/>
</dbReference>
<dbReference type="FunFam" id="2.60.40.60:FF:000020">
    <property type="entry name" value="Dachsous cadherin-related 1b"/>
    <property type="match status" value="3"/>
</dbReference>
<dbReference type="FunFam" id="2.60.40.60:FF:000116">
    <property type="entry name" value="Dachsous cadherin-related 2"/>
    <property type="match status" value="1"/>
</dbReference>
<dbReference type="FunFam" id="2.60.40.60:FF:000032">
    <property type="entry name" value="FAT atypical cadherin 1"/>
    <property type="match status" value="1"/>
</dbReference>
<dbReference type="FunFam" id="2.60.40.60:FF:000033">
    <property type="entry name" value="FAT atypical cadherin 1"/>
    <property type="match status" value="2"/>
</dbReference>
<dbReference type="FunFam" id="2.60.40.60:FF:000037">
    <property type="entry name" value="FAT atypical cadherin 1"/>
    <property type="match status" value="1"/>
</dbReference>
<dbReference type="FunFam" id="2.60.40.60:FF:000080">
    <property type="entry name" value="FAT atypical cadherin 1"/>
    <property type="match status" value="2"/>
</dbReference>
<dbReference type="FunFam" id="2.60.40.60:FF:000024">
    <property type="entry name" value="FAT atypical cadherin 3"/>
    <property type="match status" value="1"/>
</dbReference>
<dbReference type="FunFam" id="2.60.40.60:FF:000039">
    <property type="entry name" value="FAT atypical cadherin 3"/>
    <property type="match status" value="1"/>
</dbReference>
<dbReference type="FunFam" id="2.60.40.60:FF:000101">
    <property type="entry name" value="FAT atypical cadherin 4"/>
    <property type="match status" value="1"/>
</dbReference>
<dbReference type="FunFam" id="2.60.40.60:FF:000106">
    <property type="entry name" value="FAT atypical cadherin 4"/>
    <property type="match status" value="1"/>
</dbReference>
<dbReference type="FunFam" id="2.60.40.60:FF:000108">
    <property type="entry name" value="FAT atypical cadherin 4"/>
    <property type="match status" value="1"/>
</dbReference>
<dbReference type="FunFam" id="2.60.40.60:FF:000110">
    <property type="entry name" value="FAT atypical cadherin 4"/>
    <property type="match status" value="1"/>
</dbReference>
<dbReference type="FunFam" id="2.60.40.60:FF:000143">
    <property type="entry name" value="FAT atypical cadherin 4"/>
    <property type="match status" value="1"/>
</dbReference>
<dbReference type="FunFam" id="2.60.40.60:FF:000144">
    <property type="entry name" value="FAT atypical cadherin 4"/>
    <property type="match status" value="1"/>
</dbReference>
<dbReference type="FunFam" id="2.60.40.60:FF:000154">
    <property type="entry name" value="FAT atypical cadherin 4"/>
    <property type="match status" value="1"/>
</dbReference>
<dbReference type="FunFam" id="2.60.40.60:FF:000035">
    <property type="entry name" value="Protocadherin Fat 3"/>
    <property type="match status" value="1"/>
</dbReference>
<dbReference type="FunFam" id="2.10.25.10:FF:000709">
    <property type="entry name" value="Protocadherin Fat 4"/>
    <property type="match status" value="1"/>
</dbReference>
<dbReference type="FunFam" id="2.60.40.60:FF:000340">
    <property type="entry name" value="Protocadherin Fat 4"/>
    <property type="match status" value="1"/>
</dbReference>
<dbReference type="FunFam" id="2.60.40.60:FF:000081">
    <property type="entry name" value="protocadherin Fat 4"/>
    <property type="match status" value="1"/>
</dbReference>
<dbReference type="FunFam" id="2.60.40.60:FF:000118">
    <property type="entry name" value="protocadherin Fat 4"/>
    <property type="match status" value="1"/>
</dbReference>
<dbReference type="FunFam" id="2.60.40.60:FF:000134">
    <property type="entry name" value="protocadherin Fat 4"/>
    <property type="match status" value="1"/>
</dbReference>
<dbReference type="Gene3D" id="2.60.120.200">
    <property type="match status" value="2"/>
</dbReference>
<dbReference type="Gene3D" id="2.60.40.60">
    <property type="entry name" value="Cadherins"/>
    <property type="match status" value="34"/>
</dbReference>
<dbReference type="Gene3D" id="2.10.25.10">
    <property type="entry name" value="Laminin"/>
    <property type="match status" value="4"/>
</dbReference>
<dbReference type="InterPro" id="IPR002126">
    <property type="entry name" value="Cadherin-like_dom"/>
</dbReference>
<dbReference type="InterPro" id="IPR015919">
    <property type="entry name" value="Cadherin-like_sf"/>
</dbReference>
<dbReference type="InterPro" id="IPR020894">
    <property type="entry name" value="Cadherin_CS"/>
</dbReference>
<dbReference type="InterPro" id="IPR013320">
    <property type="entry name" value="ConA-like_dom_sf"/>
</dbReference>
<dbReference type="InterPro" id="IPR001881">
    <property type="entry name" value="EGF-like_Ca-bd_dom"/>
</dbReference>
<dbReference type="InterPro" id="IPR000742">
    <property type="entry name" value="EGF-like_dom"/>
</dbReference>
<dbReference type="InterPro" id="IPR001791">
    <property type="entry name" value="Laminin_G"/>
</dbReference>
<dbReference type="PANTHER" id="PTHR24026">
    <property type="entry name" value="FAT ATYPICAL CADHERIN-RELATED"/>
    <property type="match status" value="1"/>
</dbReference>
<dbReference type="PANTHER" id="PTHR24026:SF51">
    <property type="entry name" value="PROTOCADHERIN-LIKE WING POLARITY PROTEIN STAN"/>
    <property type="match status" value="1"/>
</dbReference>
<dbReference type="Pfam" id="PF00028">
    <property type="entry name" value="Cadherin"/>
    <property type="match status" value="33"/>
</dbReference>
<dbReference type="Pfam" id="PF25374">
    <property type="entry name" value="Cadherin_FAT4_N"/>
    <property type="match status" value="1"/>
</dbReference>
<dbReference type="Pfam" id="PF00008">
    <property type="entry name" value="EGF"/>
    <property type="match status" value="2"/>
</dbReference>
<dbReference type="Pfam" id="PF00054">
    <property type="entry name" value="Laminin_G_1"/>
    <property type="match status" value="1"/>
</dbReference>
<dbReference type="Pfam" id="PF02210">
    <property type="entry name" value="Laminin_G_2"/>
    <property type="match status" value="1"/>
</dbReference>
<dbReference type="PRINTS" id="PR00205">
    <property type="entry name" value="CADHERIN"/>
</dbReference>
<dbReference type="SMART" id="SM00112">
    <property type="entry name" value="CA"/>
    <property type="match status" value="34"/>
</dbReference>
<dbReference type="SMART" id="SM00181">
    <property type="entry name" value="EGF"/>
    <property type="match status" value="5"/>
</dbReference>
<dbReference type="SMART" id="SM00179">
    <property type="entry name" value="EGF_CA"/>
    <property type="match status" value="3"/>
</dbReference>
<dbReference type="SMART" id="SM00282">
    <property type="entry name" value="LamG"/>
    <property type="match status" value="2"/>
</dbReference>
<dbReference type="SUPFAM" id="SSF49313">
    <property type="entry name" value="Cadherin-like"/>
    <property type="match status" value="34"/>
</dbReference>
<dbReference type="SUPFAM" id="SSF49899">
    <property type="entry name" value="Concanavalin A-like lectins/glucanases"/>
    <property type="match status" value="2"/>
</dbReference>
<dbReference type="SUPFAM" id="SSF57196">
    <property type="entry name" value="EGF/Laminin"/>
    <property type="match status" value="1"/>
</dbReference>
<dbReference type="PROSITE" id="PS00232">
    <property type="entry name" value="CADHERIN_1"/>
    <property type="match status" value="22"/>
</dbReference>
<dbReference type="PROSITE" id="PS50268">
    <property type="entry name" value="CADHERIN_2"/>
    <property type="match status" value="34"/>
</dbReference>
<dbReference type="PROSITE" id="PS00022">
    <property type="entry name" value="EGF_1"/>
    <property type="match status" value="4"/>
</dbReference>
<dbReference type="PROSITE" id="PS01186">
    <property type="entry name" value="EGF_2"/>
    <property type="match status" value="2"/>
</dbReference>
<dbReference type="PROSITE" id="PS50026">
    <property type="entry name" value="EGF_3"/>
    <property type="match status" value="4"/>
</dbReference>
<dbReference type="PROSITE" id="PS50025">
    <property type="entry name" value="LAM_G_DOMAIN"/>
    <property type="match status" value="2"/>
</dbReference>
<reference key="1">
    <citation type="journal article" date="1991" name="Cell">
        <title>The fat tumor suppressor gene in Drosophila encodes a novel member of the cadherin gene superfamily.</title>
        <authorList>
            <person name="Mahoney P.A."/>
            <person name="Weber U."/>
            <person name="Onofrechuk P."/>
            <person name="Biessmann H."/>
            <person name="Bryant P.J."/>
            <person name="Goodman C.S."/>
        </authorList>
    </citation>
    <scope>NUCLEOTIDE SEQUENCE [GENOMIC DNA]</scope>
</reference>
<reference key="2">
    <citation type="journal article" date="2000" name="Science">
        <title>The genome sequence of Drosophila melanogaster.</title>
        <authorList>
            <person name="Adams M.D."/>
            <person name="Celniker S.E."/>
            <person name="Holt R.A."/>
            <person name="Evans C.A."/>
            <person name="Gocayne J.D."/>
            <person name="Amanatides P.G."/>
            <person name="Scherer S.E."/>
            <person name="Li P.W."/>
            <person name="Hoskins R.A."/>
            <person name="Galle R.F."/>
            <person name="George R.A."/>
            <person name="Lewis S.E."/>
            <person name="Richards S."/>
            <person name="Ashburner M."/>
            <person name="Henderson S.N."/>
            <person name="Sutton G.G."/>
            <person name="Wortman J.R."/>
            <person name="Yandell M.D."/>
            <person name="Zhang Q."/>
            <person name="Chen L.X."/>
            <person name="Brandon R.C."/>
            <person name="Rogers Y.-H.C."/>
            <person name="Blazej R.G."/>
            <person name="Champe M."/>
            <person name="Pfeiffer B.D."/>
            <person name="Wan K.H."/>
            <person name="Doyle C."/>
            <person name="Baxter E.G."/>
            <person name="Helt G."/>
            <person name="Nelson C.R."/>
            <person name="Miklos G.L.G."/>
            <person name="Abril J.F."/>
            <person name="Agbayani A."/>
            <person name="An H.-J."/>
            <person name="Andrews-Pfannkoch C."/>
            <person name="Baldwin D."/>
            <person name="Ballew R.M."/>
            <person name="Basu A."/>
            <person name="Baxendale J."/>
            <person name="Bayraktaroglu L."/>
            <person name="Beasley E.M."/>
            <person name="Beeson K.Y."/>
            <person name="Benos P.V."/>
            <person name="Berman B.P."/>
            <person name="Bhandari D."/>
            <person name="Bolshakov S."/>
            <person name="Borkova D."/>
            <person name="Botchan M.R."/>
            <person name="Bouck J."/>
            <person name="Brokstein P."/>
            <person name="Brottier P."/>
            <person name="Burtis K.C."/>
            <person name="Busam D.A."/>
            <person name="Butler H."/>
            <person name="Cadieu E."/>
            <person name="Center A."/>
            <person name="Chandra I."/>
            <person name="Cherry J.M."/>
            <person name="Cawley S."/>
            <person name="Dahlke C."/>
            <person name="Davenport L.B."/>
            <person name="Davies P."/>
            <person name="de Pablos B."/>
            <person name="Delcher A."/>
            <person name="Deng Z."/>
            <person name="Mays A.D."/>
            <person name="Dew I."/>
            <person name="Dietz S.M."/>
            <person name="Dodson K."/>
            <person name="Doup L.E."/>
            <person name="Downes M."/>
            <person name="Dugan-Rocha S."/>
            <person name="Dunkov B.C."/>
            <person name="Dunn P."/>
            <person name="Durbin K.J."/>
            <person name="Evangelista C.C."/>
            <person name="Ferraz C."/>
            <person name="Ferriera S."/>
            <person name="Fleischmann W."/>
            <person name="Fosler C."/>
            <person name="Gabrielian A.E."/>
            <person name="Garg N.S."/>
            <person name="Gelbart W.M."/>
            <person name="Glasser K."/>
            <person name="Glodek A."/>
            <person name="Gong F."/>
            <person name="Gorrell J.H."/>
            <person name="Gu Z."/>
            <person name="Guan P."/>
            <person name="Harris M."/>
            <person name="Harris N.L."/>
            <person name="Harvey D.A."/>
            <person name="Heiman T.J."/>
            <person name="Hernandez J.R."/>
            <person name="Houck J."/>
            <person name="Hostin D."/>
            <person name="Houston K.A."/>
            <person name="Howland T.J."/>
            <person name="Wei M.-H."/>
            <person name="Ibegwam C."/>
            <person name="Jalali M."/>
            <person name="Kalush F."/>
            <person name="Karpen G.H."/>
            <person name="Ke Z."/>
            <person name="Kennison J.A."/>
            <person name="Ketchum K.A."/>
            <person name="Kimmel B.E."/>
            <person name="Kodira C.D."/>
            <person name="Kraft C.L."/>
            <person name="Kravitz S."/>
            <person name="Kulp D."/>
            <person name="Lai Z."/>
            <person name="Lasko P."/>
            <person name="Lei Y."/>
            <person name="Levitsky A.A."/>
            <person name="Li J.H."/>
            <person name="Li Z."/>
            <person name="Liang Y."/>
            <person name="Lin X."/>
            <person name="Liu X."/>
            <person name="Mattei B."/>
            <person name="McIntosh T.C."/>
            <person name="McLeod M.P."/>
            <person name="McPherson D."/>
            <person name="Merkulov G."/>
            <person name="Milshina N.V."/>
            <person name="Mobarry C."/>
            <person name="Morris J."/>
            <person name="Moshrefi A."/>
            <person name="Mount S.M."/>
            <person name="Moy M."/>
            <person name="Murphy B."/>
            <person name="Murphy L."/>
            <person name="Muzny D.M."/>
            <person name="Nelson D.L."/>
            <person name="Nelson D.R."/>
            <person name="Nelson K.A."/>
            <person name="Nixon K."/>
            <person name="Nusskern D.R."/>
            <person name="Pacleb J.M."/>
            <person name="Palazzolo M."/>
            <person name="Pittman G.S."/>
            <person name="Pan S."/>
            <person name="Pollard J."/>
            <person name="Puri V."/>
            <person name="Reese M.G."/>
            <person name="Reinert K."/>
            <person name="Remington K."/>
            <person name="Saunders R.D.C."/>
            <person name="Scheeler F."/>
            <person name="Shen H."/>
            <person name="Shue B.C."/>
            <person name="Siden-Kiamos I."/>
            <person name="Simpson M."/>
            <person name="Skupski M.P."/>
            <person name="Smith T.J."/>
            <person name="Spier E."/>
            <person name="Spradling A.C."/>
            <person name="Stapleton M."/>
            <person name="Strong R."/>
            <person name="Sun E."/>
            <person name="Svirskas R."/>
            <person name="Tector C."/>
            <person name="Turner R."/>
            <person name="Venter E."/>
            <person name="Wang A.H."/>
            <person name="Wang X."/>
            <person name="Wang Z.-Y."/>
            <person name="Wassarman D.A."/>
            <person name="Weinstock G.M."/>
            <person name="Weissenbach J."/>
            <person name="Williams S.M."/>
            <person name="Woodage T."/>
            <person name="Worley K.C."/>
            <person name="Wu D."/>
            <person name="Yang S."/>
            <person name="Yao Q.A."/>
            <person name="Ye J."/>
            <person name="Yeh R.-F."/>
            <person name="Zaveri J.S."/>
            <person name="Zhan M."/>
            <person name="Zhang G."/>
            <person name="Zhao Q."/>
            <person name="Zheng L."/>
            <person name="Zheng X.H."/>
            <person name="Zhong F.N."/>
            <person name="Zhong W."/>
            <person name="Zhou X."/>
            <person name="Zhu S.C."/>
            <person name="Zhu X."/>
            <person name="Smith H.O."/>
            <person name="Gibbs R.A."/>
            <person name="Myers E.W."/>
            <person name="Rubin G.M."/>
            <person name="Venter J.C."/>
        </authorList>
    </citation>
    <scope>NUCLEOTIDE SEQUENCE [LARGE SCALE GENOMIC DNA]</scope>
    <source>
        <strain>Berkeley</strain>
    </source>
</reference>
<reference key="3">
    <citation type="journal article" date="2002" name="Genome Biol.">
        <title>Annotation of the Drosophila melanogaster euchromatic genome: a systematic review.</title>
        <authorList>
            <person name="Misra S."/>
            <person name="Crosby M.A."/>
            <person name="Mungall C.J."/>
            <person name="Matthews B.B."/>
            <person name="Campbell K.S."/>
            <person name="Hradecky P."/>
            <person name="Huang Y."/>
            <person name="Kaminker J.S."/>
            <person name="Millburn G.H."/>
            <person name="Prochnik S.E."/>
            <person name="Smith C.D."/>
            <person name="Tupy J.L."/>
            <person name="Whitfield E.J."/>
            <person name="Bayraktaroglu L."/>
            <person name="Berman B.P."/>
            <person name="Bettencourt B.R."/>
            <person name="Celniker S.E."/>
            <person name="de Grey A.D.N.J."/>
            <person name="Drysdale R.A."/>
            <person name="Harris N.L."/>
            <person name="Richter J."/>
            <person name="Russo S."/>
            <person name="Schroeder A.J."/>
            <person name="Shu S.Q."/>
            <person name="Stapleton M."/>
            <person name="Yamada C."/>
            <person name="Ashburner M."/>
            <person name="Gelbart W.M."/>
            <person name="Rubin G.M."/>
            <person name="Lewis S.E."/>
        </authorList>
    </citation>
    <scope>GENOME REANNOTATION</scope>
    <source>
        <strain>Berkeley</strain>
    </source>
</reference>
<reference key="4">
    <citation type="journal article" date="2002" name="Cell">
        <title>Regulation of Frizzled by fat-like cadherins during planar polarity signaling in the Drosophila compound eye.</title>
        <authorList>
            <person name="Yang C.H."/>
            <person name="Axelrod J.D."/>
            <person name="Simon M.A."/>
        </authorList>
    </citation>
    <scope>FUNCTION</scope>
    <scope>SUBCELLULAR LOCATION</scope>
</reference>
<reference key="5">
    <citation type="journal article" date="2003" name="Nature">
        <title>Fidelity in planar cell polarity signalling.</title>
        <authorList>
            <person name="Ma D."/>
            <person name="Yang C.H."/>
            <person name="McNeill H."/>
            <person name="Simon M.A."/>
            <person name="Axelrod J.D."/>
        </authorList>
    </citation>
    <scope>FUNCTION</scope>
</reference>
<reference key="6">
    <citation type="journal article" date="2004" name="Development">
        <title>Interactions between Fat and Dachsous and the regulation of planar cell polarity in the Drosophila wing.</title>
        <authorList>
            <person name="Matakatsu H."/>
            <person name="Blair S.S."/>
        </authorList>
    </citation>
    <scope>FUNCTION</scope>
</reference>
<reference key="7">
    <citation type="journal article" date="2004" name="Development">
        <title>Planar cell polarity in the Drosophila eye is directed by graded Four-jointed and Dachsous expression.</title>
        <authorList>
            <person name="Simon M.A."/>
        </authorList>
    </citation>
    <scope>FUNCTION</scope>
</reference>
<reference key="8">
    <citation type="journal article" date="2006" name="Development">
        <title>Separating the adhesive and signaling functions of the Fat and Dachsous protocadherins.</title>
        <authorList>
            <person name="Matakatsu H."/>
            <person name="Blair S.S."/>
        </authorList>
    </citation>
    <scope>DOMAIN</scope>
</reference>
<reference key="9">
    <citation type="journal article" date="2006" name="Curr. Biol.">
        <title>The fat cadherin acts through the hippo tumor-suppressor pathway to regulate tissue size.</title>
        <authorList>
            <person name="Willecke M."/>
            <person name="Hamaratoglu F."/>
            <person name="Kango-Singh M."/>
            <person name="Udan R."/>
            <person name="Chen C.L."/>
            <person name="Tao C."/>
            <person name="Zhang X."/>
            <person name="Halder G."/>
        </authorList>
    </citation>
    <scope>FUNCTION</scope>
    <scope>DISRUPTION PHENOTYPE</scope>
</reference>
<reference key="10">
    <citation type="journal article" date="2008" name="J. Proteome Res.">
        <title>Phosphoproteome analysis of Drosophila melanogaster embryos.</title>
        <authorList>
            <person name="Zhai B."/>
            <person name="Villen J."/>
            <person name="Beausoleil S.A."/>
            <person name="Mintseris J."/>
            <person name="Gygi S.P."/>
        </authorList>
    </citation>
    <scope>PHOSPHORYLATION [LARGE SCALE ANALYSIS] AT SER-4843; SER-5054 AND SER-5061</scope>
    <scope>IDENTIFICATION BY MASS SPECTROMETRY</scope>
    <source>
        <tissue>Embryo</tissue>
    </source>
</reference>
<reference key="11">
    <citation type="journal article" date="2008" name="Science">
        <title>Four-jointed is a Golgi kinase that phosphorylates a subset of cadherin domains.</title>
        <authorList>
            <person name="Ishikawa H.O."/>
            <person name="Takeuchi H."/>
            <person name="Haltiwanger R.S."/>
            <person name="Irvine K.D."/>
        </authorList>
    </citation>
    <scope>PHOSPHORYLATION</scope>
</reference>
<reference key="12">
    <citation type="journal article" date="2009" name="Proc. Natl. Acad. Sci. U.S.A.">
        <title>Processing and phosphorylation of the Fat receptor.</title>
        <authorList>
            <person name="Feng Y."/>
            <person name="Irvine K.D."/>
        </authorList>
    </citation>
    <scope>PHOSPHORYLATION</scope>
    <scope>CLEAVAGE</scope>
</reference>
<reference key="13">
    <citation type="journal article" date="2010" name="Curr. Biol.">
        <title>Modulation of fat:dachsous binding by the cadherin domain kinase four-jointed.</title>
        <authorList>
            <person name="Simon M.A."/>
            <person name="Xu A."/>
            <person name="Ishikawa H.O."/>
            <person name="Irvine K.D."/>
        </authorList>
    </citation>
    <scope>FUNCTION</scope>
    <scope>PHOSPHORYLATION</scope>
    <scope>MUTAGENESIS OF SER-273</scope>
</reference>
<reference key="14">
    <citation type="journal article" date="2013" name="PLoS ONE">
        <title>The Drosophila Cadherin Fat regulates tissue size and planar cell polarity through different domains.</title>
        <authorList>
            <person name="Zhao X."/>
            <person name="Yang C.H."/>
            <person name="Simon M.A."/>
        </authorList>
    </citation>
    <scope>FUNCTION</scope>
</reference>
<reference key="15">
    <citation type="journal article" date="2014" name="Cell">
        <title>The atypical cadherin fat directly regulates mitochondrial function and metabolic state.</title>
        <authorList>
            <person name="Sing A."/>
            <person name="Tsatskis Y."/>
            <person name="Fabian L."/>
            <person name="Hester I."/>
            <person name="Rosenfeld R."/>
            <person name="Serricchio M."/>
            <person name="Yau N."/>
            <person name="Bietenhader M."/>
            <person name="Shanbhag R."/>
            <person name="Jurisicova A."/>
            <person name="Brill J.A."/>
            <person name="McQuibban G.A."/>
            <person name="McNeill H."/>
        </authorList>
    </citation>
    <scope>FUNCTION</scope>
    <scope>SUBCELLULAR LOCATION</scope>
    <scope>CLEAVAGE</scope>
    <scope>DISRUPTION PHENOTYPE</scope>
    <scope>INTERACTION WITH ATPSYNC AND ND-24</scope>
</reference>
<reference key="16">
    <citation type="journal article" date="2014" name="Elife">
        <title>The Drosophila F-box protein Fbxl7 binds to the protocadherin fat and regulates Dachs localization and Hippo signaling.</title>
        <authorList>
            <person name="Bosch J.A."/>
            <person name="Sumabat T.M."/>
            <person name="Hafezi Y."/>
            <person name="Pellock B.J."/>
            <person name="Gandhi K.D."/>
            <person name="Hariharan I.K."/>
        </authorList>
    </citation>
    <scope>SUBCELLULAR LOCATION</scope>
    <scope>INTERACTION WITH FBXL7</scope>
    <scope>MUTAGENESIS OF THR-4854</scope>
</reference>
<gene>
    <name evidence="22" type="primary">ft</name>
    <name evidence="22" type="ORF">CG3352</name>
</gene>
<comment type="function">
    <text evidence="7 8 9 10 12 16 17">Involved in regulation of planar cell polarity in the compound eye where it is required for correct specification of the R3 and R4 photoreceptor cells by regulating Fz activity in the R3/R4 precursor cells (PubMed:11893338). This is likely to occur through creation of an ft gradient so that the equatorial R3/R4 precursor cell has a higher level of ft function than its polar neighbor (PubMed:15548581). Also required for planar cell polarity of wing hairs (PubMed:12540853, PubMed:15240556). Mediates heterophilic cell adhesion in vitro and is required to stabilize ds on the cell surface (PubMed:15240556). Involved in regulation of eye imaginal disk size (PubMed:23667559). Upstream component of the Hippo pathway where it is likely to act as a cell surface receptor involved in regulation of tissue size and is required for the localization and stability of ex (PubMed:16996265). Probably acts as a cell surface receptor for ds (PubMed:20434335).</text>
</comment>
<comment type="function">
    <molecule>Ft-mito</molecule>
    <text evidence="19">Regulates mitochondrial electron transport chain integrity and promotes oxidative phosphorylation.</text>
</comment>
<comment type="subunit">
    <text evidence="18 19">Interacts with Fbxl7 (PubMed:25107277). Ft-mito interacts with NADH dehydrogenase subunit ND-24 and with ATP synthase subunit ATPsynC (PubMed:25215488).</text>
</comment>
<comment type="interaction">
    <interactant intactId="EBI-135374">
        <id>P33450</id>
    </interactant>
    <interactant intactId="EBI-153383">
        <id>Q6NN09</id>
        <label>ATPsynC</label>
    </interactant>
    <organismsDiffer>false</organismsDiffer>
    <experiments>2</experiments>
</comment>
<comment type="interaction">
    <interactant intactId="EBI-135374">
        <id>P33450</id>
    </interactant>
    <interactant intactId="EBI-153156">
        <id>Q8IQA6</id>
        <label>Gug</label>
    </interactant>
    <organismsDiffer>false</organismsDiffer>
    <experiments>3</experiments>
</comment>
<comment type="interaction">
    <interactant intactId="EBI-135374">
        <id>P33450</id>
    </interactant>
    <interactant intactId="EBI-189196">
        <id>Q9VX36</id>
        <label>ND-24</label>
    </interactant>
    <organismsDiffer>false</organismsDiffer>
    <experiments>4</experiments>
</comment>
<comment type="subcellular location">
    <subcellularLocation>
        <location evidence="7">Cell membrane</location>
        <topology evidence="1">Single-pass type I membrane protein</topology>
    </subcellularLocation>
    <subcellularLocation>
        <location evidence="18">Apical cell membrane</location>
    </subcellularLocation>
</comment>
<comment type="subcellular location">
    <molecule>Ft-mito</molecule>
    <subcellularLocation>
        <location evidence="19">Mitochondrion</location>
    </subcellularLocation>
</comment>
<comment type="domain">
    <text evidence="11">The extracellular domain is required for correct subcellular localization and for cell adhesion.</text>
</comment>
<comment type="domain">
    <text evidence="11">The intracellular domain is sufficient for viability, growth control and planar cell polarity.</text>
</comment>
<comment type="PTM">
    <text evidence="14 15 16">Phosphorylated by fj on Ser/Thr of cadherin domains (PubMed:18635802). Phosphorylation by fj enhances binding to ds (PubMed:20434335). Phosphorylated in the cytoplasmic domain in a dco-dependent manner which is promoted by ds (PubMed:19574458).</text>
</comment>
<comment type="PTM">
    <text evidence="15 19">Proteolytically cleaved to yield stably associated N- and C-terminal fragments (PubMed:19574458). The C-terminal fragment is processed further to release a 68 kDa mitochondrial fragment, Ft-mito (PubMed:25215488).</text>
</comment>
<comment type="disruption phenotype">
    <text evidence="12 19">Severe overgrown imaginal disk derivatives and pupal death (PubMed:16996265). Overall larval growth is reduced (PubMed:25215488). Cells are round, swollen and have abnormal mitochondrial cristae due to defects in assembly of the mitochondrial electron chain complexes I and V (CI and CV) (PubMed:25215488). Loss of CI activity results in a switch to aerobic glycosis which increases lactate levels (PubMed:25215488). RNAi-mediated knockdown results in dorsal-ventral inversions in ommatidia planar cell polarity (PubMed:25215488).</text>
</comment>
<comment type="miscellaneous">
    <text evidence="20">The name 'fat' originates from weak mutant alleles that exhibit a broadening of the abdomen.</text>
</comment>
<accession>P33450</accession>
<accession>Q9VQX5</accession>
<sequence>MERLLLLFFLLLAGRESLCQTGDTKLELLAPRGRSYATTYEQYAAFPRRRSSSSSPSGEMQSRAVDTSADFEVLEGQPRGTTVGFIPTKPKFSYRFNEPPREFTLDPVTGEVKTNVVLDREGMRDHYDLVVLSSQPTYPIEVRIKVLDVNDNSPEFPEPSIAISFSESATSGTRLLLDAATDADVGENGVTDQYEIVAGNVDNKFRLVTTANPSGDTSYLHLETTGNLDRESRGSYQLNISARDGGSPPRFGYLQVNVTILDVNDNPPIFDHSDYNVSLNETALPGTPVVTVMASDNDLGDNSKITYYLAETEHQFTVNPETGVISTTERVNCPQQTNVKSSASQKSCVFTVFARDHGSPRQDGRTYVTVNLLDTNDHDPIISFRFFPDGGKVATVDENAVNGTVVAAVAVKDSDSGLNGRTSVRIVSGNELGHFRLEEAADLHIVRVNGVLDREEIGKYNLTVVAMDQGTPARTTTAHLIIDVNDVNDHEPVFEKSEYSAVLSELAPTGSFVASITATDEDTGVNAQVHYDILSGNELKWFSMDPLTGLIVTTGPLDREIRDTVELSISARDGGPNPKFAYTQLKVIILDENDEAPQFSQREQNVTLGEDAPPQTIVALMTATDHDQGTNGSVTFALAPSVERLYPLQFALDALTGQLTTRRPLDREKMSQYEISVIARDQGAPTPQSATATVWLNVADVNDNDPQFYPRHYIYSLADDDDDIKLKKEVEKERILLHVTASDKDDGDNALIEYRLESGGEGLFQLDARSGAISLRGDAPASMHWKPHYKLLVSARDAGQRRSQQDAIVEIVLKSKLEMLECGQAQAGGYEFQMVEDHEQQRNSQPNREVGIVQVKSTNGKANSHIEYDIIQGDRAQNFRIDTRSGRITTARPLDREEQANYRLTILASSSSSSSAAASSVSYGQCIVNIAIIDLNDNAPVFALDRESEPTISLPENAAVGQEIYLSRVRDRDAGVNSRISYSLTNNPNQQFRIGPVTGVLYLQRPIRAEPGSLIHVELMATDAGSPPLSSKLSLSVLIADVNDHTPVFDHTSYETSLPETTKVNTRFFALAATDIDLGDNGRISYEIIEGNTERMFGVFPDGYLFVRAPLDREERDYYALTVSCRDAGQPSRSSVVPVVIHVIDENDNAPQFTNSTFTFSIPENAPADTFVGKLTAVDRDIGRNAELSFTLSSQTQDFTIDTRNGFIKTLRPFDREALVKVSRNAEASGEDGSLRGSMAGNYMLLEATVSDNGIPRLQDKVKVKVIVTDVNDNAPEFLRAPYHVTISEGASEGTHITHVFTQDADEGLNGDVYYSLAKGNEAGQFNLDSATGQLSLGRRLDRESQEIHHLIVVAKDAALKHPLSSNASITIVVLDENDNAPEFTQSSSEVSVLETSPTGTELMRFRASDADQGVNSQVVFSISAGNRRDTFHIDSITGSLYLHKPLDYEDITSYTLNITASDCGTPSLSTTVLYNVLVVDDNDNPPIFPSTAIVRQIKEGIPLKTPIVTVTADDPDSGLNGKVSYAISKQEPQLPQGRHFGINTETGVIHTLREIDRESIDTFRLTVVATDRAQPSERQLSTEKLVTVIVEDINDNAPVFVSMNAAILPPKFSTSKGSSTAVMQVHAKDADSSSNGLVTYEIVSGPQELFKLQRNTGIITFTPGPQFKQEVRYQLTLKSTDEAVQSERRSSEVYITIITPGSGGSESSVPQFEQRSKLSGSVYENEPIGTSILTVTAHLASAEIEYFVTNVTATGSRGQVDRLFDIDAKLGILSTAAELDREAGPEEYEVEVYAIALGGQPRTSRTKVRVTVLDKNDSPPQFLDTPFVYNVSEDLQIGHTISTLRAHDPDTLGSVTFLLMDGHDGKFLLEPSTGKLILNDTLDRETKSKYELRIRVSDGVQYTEAYATIQVSDTNDNPPLFEDTVYSFDIPENAQRGYQVGQIVARDADLGQNAQLSYGVVSDWANDVFSLNPQTGMLTLTARLDYEEVQHYILIVQAQDNGQPSLSTTITVYCNVLDLNDNAPIFDPMSYSSEVFENVPIATEVVTVSAKDIDSGNNGLIEYSITAGDVDSEFGIDSNGTIRTRRNLDREHRSTYTLTVTARDCADEFASFSELEETQLKLKYRSPRKYQQTRQEFLAHQKQQRLSSTVKVTILIKDVNDEVPVFISANETAIMENVAINTVVIAVKAVDNDEGRNGYIDYLMKEARDEDMGQSDPLPFSLNPTDGQLRVVDALDRELRSSYLLNITARDRGEPPQSTESQLLIRILDENDNSPVFDPKQYSASVAENASIGAMVLQVSATDVDEGANGRIRYSIVLGDQNHDFSISEDTGVVRVAKNLNYERLSRYSLTVRAEDCALENPAGDTAELTINILDINDNRPTFLDSPYLARVMENTVPPNGGYVLTVNAYDADTPPLNSQVRYFLKEGDSDLFRINASSGDIALLKPLDREQQSEYTLTLVAMDTGSPPLTGTGIVRVEVQDINDNDPVFELQSYHATVRENLPSGTHVLTPRATDKDEGLNAKLRFNLLGEHMHRFHIDSETGEISTATTLDREETSVYHLTLMAQDSSITEPRASSVNLTISVSDVNDNIPKFDSTTYNVAVPERISKGEFVFGARALDLDDGENAVVHYTISGRDQHYFDINTKTGVVSTKLELKTKTKSHDDLTYTIVISAMDQGEQSLSSKAELTVILRPPELFPTFAYMANSHFAMSEDVRPGKMITKVSATSPKKGLVGKIRYAIAGGIMGDSLRVDPNSGLLSVGQDGLDYELTHLYEIWIEAADGDTPSLRSVTLITLNVTDANDNAPVMEQLIYNAEVLEEESPPQLIAVVKASDRDSGDNGNVIYRLQNDFDGTFEITESGEIYTRMRLDREEIGDYAFVVEAVDQGVPHMTGTASVLLHLLDKNDNPPKFTRLFSLNVTENAEIGSFVIRVTSSDLDLGANANASYSFSENPGEKFRIEPQSGNITVAGHLDREQQDEYILKVVASDGAWRAETPITITIQDQNDNAPEFEHSFYSFSFPELQQSIALVGQIIATDRDKQGPNSVISYSLQQPSPMFSIDPATGEVFSKKAVRFKHSQYVRSPENMYALTVLATDNGKPPLYSECLVNINIVDAHNNPPKFEQAEYLAPLPQDAVRGQRIVRVHANDKQDLGTNEMDYSLMTFNLSSIFSVGRHDGWITLVKPIQVPPNTRYELVVRATDRGVPPQSDETRVVIVVTGENMDTPRFSVNSYQVIVPENEPVGSTILTVGATDDDTGPNGMLRYSISGGNERQDFSVDERTGGIVIQQQLDYDLIQEYHLNITVQDLGYHPLSSVAMLTIILTDVNDNPPVFNHKEYHCYIPENKPVGTFVFQAHAADKDSPKNAIIHYAFLPSGPDRHFFIMNQSNGTISSAVSFDYEERRIYTLQIKAKNPDSSMESYANLYVHVLGVNEFYPQFLQPVFHFDVSETSAVGTRVGAVQATDKDSGEDGRVYYLLVGSSNDKGFRIDTNTGLIYVARHLDRETQNRVVLTVMAKNYGSIRGNDTDEAQVIISIQDGNDPPEFIKHYYTSTISEAAPVGTKVTTVKAIDKDVRTQNNQFSYSIINGNLKQSFKIDVQTGEISTASRLDREETSTYNLVIGAIDTGLPPQTGSATVHIELEDVNDNGPTFTPEGLNGYISENEPAGTSIMTLIASDPDLPRNGGPFTYQLIGGKHKSWLSVDRNSGVVRSTTSFDREMTPILEAIIEVEDSGKPKQKSQHLLTITVLDQNDNPSTTRSLHIAVSLFNGDLPSNVKLADVRPNDIDIVGDYRCRLQKNPAQSQLQLAIPRACDLITTSHTTPIASVFSYTGNDGKHGDVSSKVSVAFQSFNNETLANSVSIMVRNMTAYHFLANHYRPILEMIKSRMSNEDEVILYSLLEGGSGNSTNLQLLMAVRLAKTSYQQPKYLIERLREKRSAFSELLQKEVIVGYEPCSEPDVCENGGVCSATMRLLDAHSFVIQDSPALVLSGPRVVHDYSCQCTSGFSGEQCSRRQDPCLPNPCHSQVQCRRLGSDFQCMCPANRDGKHCEKERSDVCYSKPCRNGGSCQRSPDGSSYFCLCRPGFRGNQCESVSDSCRPNPCLHGGLCVSLKPGYKCNCTPGRYGRHCERFSYGFQPLSYMTFPALDVTTNDISIVFATTKPNSLLLYNYGMQSGGRSDFLAIELVHGRAYFSSGGARTAISTVIAGRNLADGGWHKVTATRNGRVMSLSVAKCADSGDVCTECLPGDSSCYADEVGPVGTLNFNKQPLMIGGLSSADPILERPGQVHSDDLVGCLHSVHIGGRALNLSLPLQQKGILAGCNRQACQPALAAERCGGFAGQCIDRWSSSLCQCGGHLQSPDCSDSLEPITLGEGAFVEFRISEIYRRMQLLDNLYNSKSAWLDNQQMRERRAVSNFSTASQIYEAPKMLSMLFRTYKDQGQILYAATNQMFTSLSLREGRLVYYSKQHLTINMTVQETSTLNDGKWHNVSLFSESRSLRLIVDGRQVGDELDIAGVHDFLDPYLTILNVGGEAFVGCLANVTVNNELQPLNGSGSIFPEVRYHGKIESGCRGDIGQDAAQVADPLSIGFTLVIVFFVILVVAILGSYVIYRFRGKQEKIGSLSCGVPGFKIKHPGGPVTQSQVDHVLVRNLHPSEAPSPPVGAGDHMRPPVGSHHLVGPELLTKKFKEPTAEMPQPQQQQQRPQRPDIIERESPLIREDHHLPIPPLHPLPLEHASSVDMGSEYPEHYDLENASSIAPSDIDIVYHYKGYREAAGLRKYKASVPPVSAYTHHKHQNSGSQQQQQQHRHTAPFVTRNQGGQPPPPPTSASRTHQSTPLARLSPSSELSSQQPRILTLHDISGKPLQSALLATTSSSGGVGKDVHSNSERSLNSPVMSQLSGQSSSASRQKPGVPQQQAQQTSMGLTAEEIERLNGRPRTCSLISTLDAVSSSSEAPRVSSSALHMSLGGDVDAHSSTSTDESGNDSFTCSEIEYDNNSLSGDGKYSTSKSLLDGRSPVSRALSGGETSRNPPTTVVKTPPIPPHAYDGFESSFRGSLSTLVASDDDIANHLSGIYRKANGAASPSATTLGWEYLLNWGPSYENLMGVFKDIAELPDTNGPSQQQQQQTQVVSTLRMPSSNGPAAPEEYV</sequence>
<feature type="signal peptide" evidence="2">
    <location>
        <begin position="1"/>
        <end position="35"/>
    </location>
</feature>
<feature type="chain" id="PRO_0000004015" description="Cadherin-related tumor suppressor">
    <location>
        <begin position="36"/>
        <end position="5147"/>
    </location>
</feature>
<feature type="chain" id="PRO_0000434022" description="Ft-mito" evidence="19">
    <location>
        <begin status="unknown"/>
        <end position="5147"/>
    </location>
</feature>
<feature type="topological domain" description="Extracellular" evidence="2">
    <location>
        <begin position="36"/>
        <end position="4583"/>
    </location>
</feature>
<feature type="transmembrane region" description="Helical" evidence="2">
    <location>
        <begin position="4584"/>
        <end position="4609"/>
    </location>
</feature>
<feature type="topological domain" description="Cytoplasmic" evidence="2">
    <location>
        <begin position="4610"/>
        <end position="5147"/>
    </location>
</feature>
<feature type="domain" description="Cadherin 1" evidence="3">
    <location>
        <begin position="36"/>
        <end position="156"/>
    </location>
</feature>
<feature type="domain" description="Cadherin 2" evidence="3">
    <location>
        <begin position="157"/>
        <end position="270"/>
    </location>
</feature>
<feature type="domain" description="Cadherin 3" evidence="3">
    <location>
        <begin position="271"/>
        <end position="382"/>
    </location>
</feature>
<feature type="domain" description="Cadherin 4" evidence="3">
    <location>
        <begin position="383"/>
        <end position="494"/>
    </location>
</feature>
<feature type="domain" description="Cadherin 5" evidence="3">
    <location>
        <begin position="495"/>
        <end position="599"/>
    </location>
</feature>
<feature type="domain" description="Cadherin 6" evidence="3">
    <location>
        <begin position="600"/>
        <end position="708"/>
    </location>
</feature>
<feature type="domain" description="Cadherin 7" evidence="3">
    <location>
        <begin position="709"/>
        <end position="820"/>
    </location>
</feature>
<feature type="domain" description="Cadherin 8" evidence="3">
    <location>
        <begin position="821"/>
        <end position="942"/>
    </location>
</feature>
<feature type="domain" description="Cadherin 9" evidence="3">
    <location>
        <begin position="943"/>
        <end position="1049"/>
    </location>
</feature>
<feature type="domain" description="Cadherin 10" evidence="3">
    <location>
        <begin position="1050"/>
        <end position="1153"/>
    </location>
</feature>
<feature type="domain" description="Cadherin 11" evidence="3">
    <location>
        <begin position="1154"/>
        <end position="1278"/>
    </location>
</feature>
<feature type="domain" description="Cadherin 12" evidence="3">
    <location>
        <begin position="1279"/>
        <end position="1384"/>
    </location>
</feature>
<feature type="domain" description="Cadherin 13" evidence="3">
    <location>
        <begin position="1385"/>
        <end position="1489"/>
    </location>
</feature>
<feature type="domain" description="Cadherin 14" evidence="3">
    <location>
        <begin position="1490"/>
        <end position="1601"/>
    </location>
</feature>
<feature type="domain" description="Cadherin 15" evidence="3">
    <location>
        <begin position="1602"/>
        <end position="1713"/>
    </location>
</feature>
<feature type="domain" description="Cadherin 16" evidence="3">
    <location>
        <begin position="1714"/>
        <end position="1823"/>
    </location>
</feature>
<feature type="domain" description="Cadherin 17" evidence="3">
    <location>
        <begin position="1824"/>
        <end position="1922"/>
    </location>
</feature>
<feature type="domain" description="Cadherin 18" evidence="3">
    <location>
        <begin position="1923"/>
        <end position="2027"/>
    </location>
</feature>
<feature type="domain" description="Cadherin 19" evidence="3">
    <location>
        <begin position="2028"/>
        <end position="2167"/>
    </location>
</feature>
<feature type="domain" description="Cadherin 20" evidence="3">
    <location>
        <begin position="2168"/>
        <end position="2278"/>
    </location>
</feature>
<feature type="domain" description="Cadherin 21" evidence="3">
    <location>
        <begin position="2279"/>
        <end position="2385"/>
    </location>
</feature>
<feature type="domain" description="Cadherin 22" evidence="3">
    <location>
        <begin position="2386"/>
        <end position="2491"/>
    </location>
</feature>
<feature type="domain" description="Cadherin 23" evidence="3">
    <location>
        <begin position="2492"/>
        <end position="2596"/>
    </location>
</feature>
<feature type="domain" description="Cadherin 24" evidence="3">
    <location>
        <begin position="2597"/>
        <end position="2703"/>
    </location>
</feature>
<feature type="domain" description="Cadherin 25" evidence="3">
    <location>
        <begin position="2704"/>
        <end position="2810"/>
    </location>
</feature>
<feature type="domain" description="Cadherin 26" evidence="3">
    <location>
        <begin position="2811"/>
        <end position="2913"/>
    </location>
</feature>
<feature type="domain" description="Cadherin 27" evidence="3">
    <location>
        <begin position="2914"/>
        <end position="3013"/>
    </location>
</feature>
<feature type="domain" description="Cadherin 28" evidence="3">
    <location>
        <begin position="3014"/>
        <end position="3124"/>
    </location>
</feature>
<feature type="domain" description="Cadherin 29" evidence="3">
    <location>
        <begin position="3125"/>
        <end position="3229"/>
    </location>
</feature>
<feature type="domain" description="Cadherin 30" evidence="3">
    <location>
        <begin position="3230"/>
        <end position="3334"/>
    </location>
</feature>
<feature type="domain" description="Cadherin 31" evidence="3">
    <location>
        <begin position="3335"/>
        <end position="3439"/>
    </location>
</feature>
<feature type="domain" description="Cadherin 32" evidence="3">
    <location>
        <begin position="3440"/>
        <end position="3545"/>
    </location>
</feature>
<feature type="domain" description="Cadherin 33" evidence="3">
    <location>
        <begin position="3546"/>
        <end position="3651"/>
    </location>
</feature>
<feature type="domain" description="Cadherin 34" evidence="3">
    <location>
        <begin position="3652"/>
        <end position="3756"/>
    </location>
</feature>
<feature type="domain" description="EGF-like 1" evidence="4">
    <location>
        <begin position="3950"/>
        <end position="4011"/>
    </location>
</feature>
<feature type="domain" description="EGF-like 2" evidence="4">
    <location>
        <begin position="4013"/>
        <end position="4049"/>
    </location>
</feature>
<feature type="domain" description="EGF-like 3" evidence="4">
    <location>
        <begin position="4052"/>
        <end position="4090"/>
    </location>
</feature>
<feature type="domain" description="EGF-like 4" evidence="4">
    <location>
        <begin position="4092"/>
        <end position="4128"/>
    </location>
</feature>
<feature type="domain" description="Laminin G-like 1" evidence="5">
    <location>
        <begin position="4129"/>
        <end position="4320"/>
    </location>
</feature>
<feature type="domain" description="EGF-like 5" evidence="4">
    <location>
        <begin position="4321"/>
        <end position="4362"/>
    </location>
</feature>
<feature type="domain" description="Laminin G-like 2" evidence="5">
    <location>
        <begin position="4402"/>
        <end position="4569"/>
    </location>
</feature>
<feature type="region of interest" description="Essential for stability of mitochondrial electron chain complexes I and V, and promotes interaction with ND-24" evidence="19">
    <location>
        <begin position="4744"/>
        <end position="4771"/>
    </location>
</feature>
<feature type="region of interest" description="Disordered" evidence="6">
    <location>
        <begin position="4787"/>
        <end position="4850"/>
    </location>
</feature>
<feature type="region of interest" description="Disordered" evidence="6">
    <location>
        <begin position="4871"/>
        <end position="4921"/>
    </location>
</feature>
<feature type="region of interest" description="Disordered" evidence="6">
    <location>
        <begin position="4967"/>
        <end position="5041"/>
    </location>
</feature>
<feature type="region of interest" description="Disordered" evidence="6">
    <location>
        <begin position="5113"/>
        <end position="5147"/>
    </location>
</feature>
<feature type="compositionally biased region" description="Polar residues" evidence="6">
    <location>
        <begin position="4826"/>
        <end position="4835"/>
    </location>
</feature>
<feature type="compositionally biased region" description="Low complexity" evidence="6">
    <location>
        <begin position="4838"/>
        <end position="4850"/>
    </location>
</feature>
<feature type="compositionally biased region" description="Low complexity" evidence="6">
    <location>
        <begin position="4891"/>
        <end position="4918"/>
    </location>
</feature>
<feature type="compositionally biased region" description="Polar residues" evidence="6">
    <location>
        <begin position="4972"/>
        <end position="5008"/>
    </location>
</feature>
<feature type="compositionally biased region" description="Low complexity" evidence="6">
    <location>
        <begin position="5119"/>
        <end position="5131"/>
    </location>
</feature>
<feature type="modified residue" description="Phosphoserine" evidence="13">
    <location>
        <position position="4843"/>
    </location>
</feature>
<feature type="modified residue" description="Phosphoserine" evidence="13">
    <location>
        <position position="5054"/>
    </location>
</feature>
<feature type="modified residue" description="Phosphoserine" evidence="13">
    <location>
        <position position="5061"/>
    </location>
</feature>
<feature type="glycosylation site" description="N-linked (GlcNAc...) asparagine" evidence="2">
    <location>
        <position position="239"/>
    </location>
</feature>
<feature type="glycosylation site" description="N-linked (GlcNAc...) asparagine" evidence="2">
    <location>
        <position position="257"/>
    </location>
</feature>
<feature type="glycosylation site" description="N-linked (GlcNAc...) asparagine" evidence="2">
    <location>
        <position position="276"/>
    </location>
</feature>
<feature type="glycosylation site" description="N-linked (GlcNAc...) asparagine" evidence="2">
    <location>
        <position position="280"/>
    </location>
</feature>
<feature type="glycosylation site" description="N-linked (GlcNAc...) asparagine" evidence="2">
    <location>
        <position position="402"/>
    </location>
</feature>
<feature type="glycosylation site" description="N-linked (GlcNAc...) asparagine" evidence="2">
    <location>
        <position position="461"/>
    </location>
</feature>
<feature type="glycosylation site" description="N-linked (GlcNAc...) asparagine" evidence="2">
    <location>
        <position position="605"/>
    </location>
</feature>
<feature type="glycosylation site" description="N-linked (GlcNAc...) asparagine" evidence="2">
    <location>
        <position position="631"/>
    </location>
</feature>
<feature type="glycosylation site" description="N-linked (GlcNAc...) asparagine" evidence="2">
    <location>
        <position position="1155"/>
    </location>
</feature>
<feature type="glycosylation site" description="N-linked (GlcNAc...) asparagine" evidence="2">
    <location>
        <position position="1367"/>
    </location>
</feature>
<feature type="glycosylation site" description="N-linked (GlcNAc...) asparagine" evidence="2">
    <location>
        <position position="1458"/>
    </location>
</feature>
<feature type="glycosylation site" description="N-linked (GlcNAc...) asparagine" evidence="2">
    <location>
        <position position="1751"/>
    </location>
</feature>
<feature type="glycosylation site" description="N-linked (GlcNAc...) asparagine" evidence="2">
    <location>
        <position position="1831"/>
    </location>
</feature>
<feature type="glycosylation site" description="N-linked (GlcNAc...) asparagine" evidence="2">
    <location>
        <position position="1880"/>
    </location>
</feature>
<feature type="glycosylation site" description="N-linked (GlcNAc...) asparagine" evidence="2">
    <location>
        <position position="2080"/>
    </location>
</feature>
<feature type="glycosylation site" description="N-linked (GlcNAc...) asparagine" evidence="2">
    <location>
        <position position="2171"/>
    </location>
</feature>
<feature type="glycosylation site" description="N-linked (GlcNAc...) asparagine" evidence="2">
    <location>
        <position position="2247"/>
    </location>
</feature>
<feature type="glycosylation site" description="N-linked (GlcNAc...) asparagine" evidence="2">
    <location>
        <position position="2290"/>
    </location>
</feature>
<feature type="glycosylation site" description="N-linked (GlcNAc...) asparagine" evidence="2">
    <location>
        <position position="2437"/>
    </location>
</feature>
<feature type="glycosylation site" description="N-linked (GlcNAc...) asparagine" evidence="2">
    <location>
        <position position="2581"/>
    </location>
</feature>
<feature type="glycosylation site" description="N-linked (GlcNAc...) asparagine" evidence="2">
    <location>
        <position position="2799"/>
    </location>
</feature>
<feature type="glycosylation site" description="N-linked (GlcNAc...) asparagine" evidence="2">
    <location>
        <position position="2920"/>
    </location>
</feature>
<feature type="glycosylation site" description="N-linked (GlcNAc...) asparagine" evidence="2">
    <location>
        <position position="2946"/>
    </location>
</feature>
<feature type="glycosylation site" description="N-linked (GlcNAc...) asparagine" evidence="2">
    <location>
        <position position="2967"/>
    </location>
</feature>
<feature type="glycosylation site" description="N-linked (GlcNAc...) asparagine" evidence="2">
    <location>
        <position position="3167"/>
    </location>
</feature>
<feature type="glycosylation site" description="N-linked (GlcNAc...) asparagine" evidence="2">
    <location>
        <position position="3303"/>
    </location>
</feature>
<feature type="glycosylation site" description="N-linked (GlcNAc...) asparagine" evidence="2">
    <location>
        <position position="3386"/>
    </location>
</feature>
<feature type="glycosylation site" description="N-linked (GlcNAc...) asparagine" evidence="2">
    <location>
        <position position="3389"/>
    </location>
</feature>
<feature type="glycosylation site" description="N-linked (GlcNAc...) asparagine" evidence="2">
    <location>
        <position position="3525"/>
    </location>
</feature>
<feature type="glycosylation site" description="N-linked (GlcNAc...) asparagine" evidence="2">
    <location>
        <position position="3852"/>
    </location>
</feature>
<feature type="glycosylation site" description="N-linked (GlcNAc...) asparagine" evidence="2">
    <location>
        <position position="3865"/>
    </location>
</feature>
<feature type="glycosylation site" description="N-linked (GlcNAc...) asparagine" evidence="2">
    <location>
        <position position="3905"/>
    </location>
</feature>
<feature type="glycosylation site" description="N-linked (GlcNAc...) asparagine" evidence="2">
    <location>
        <position position="4306"/>
    </location>
</feature>
<feature type="glycosylation site" description="N-linked (GlcNAc...) asparagine" evidence="2">
    <location>
        <position position="4414"/>
    </location>
</feature>
<feature type="glycosylation site" description="N-linked (GlcNAc...) asparagine" evidence="2">
    <location>
        <position position="4471"/>
    </location>
</feature>
<feature type="glycosylation site" description="N-linked (GlcNAc...) asparagine" evidence="2">
    <location>
        <position position="4487"/>
    </location>
</feature>
<feature type="glycosylation site" description="N-linked (GlcNAc...) asparagine" evidence="2">
    <location>
        <position position="4539"/>
    </location>
</feature>
<feature type="glycosylation site" description="N-linked (GlcNAc...) asparagine" evidence="2">
    <location>
        <position position="4550"/>
    </location>
</feature>
<feature type="disulfide bond" evidence="1">
    <location>
        <begin position="3954"/>
        <end position="3966"/>
    </location>
</feature>
<feature type="disulfide bond" evidence="1">
    <location>
        <begin position="3960"/>
        <end position="3999"/>
    </location>
</feature>
<feature type="disulfide bond" evidence="1">
    <location>
        <begin position="4001"/>
        <end position="4010"/>
    </location>
</feature>
<feature type="disulfide bond" evidence="1">
    <location>
        <begin position="4017"/>
        <end position="4028"/>
    </location>
</feature>
<feature type="disulfide bond" evidence="1">
    <location>
        <begin position="4022"/>
        <end position="4037"/>
    </location>
</feature>
<feature type="disulfide bond" evidence="1">
    <location>
        <begin position="4039"/>
        <end position="4048"/>
    </location>
</feature>
<feature type="disulfide bond" evidence="1">
    <location>
        <begin position="4056"/>
        <end position="4067"/>
    </location>
</feature>
<feature type="disulfide bond" evidence="1">
    <location>
        <begin position="4061"/>
        <end position="4078"/>
    </location>
</feature>
<feature type="disulfide bond" evidence="1">
    <location>
        <begin position="4080"/>
        <end position="4089"/>
    </location>
</feature>
<feature type="disulfide bond" evidence="1">
    <location>
        <begin position="4096"/>
        <end position="4107"/>
    </location>
</feature>
<feature type="disulfide bond" evidence="1">
    <location>
        <begin position="4101"/>
        <end position="4116"/>
    </location>
</feature>
<feature type="disulfide bond" evidence="1">
    <location>
        <begin position="4118"/>
        <end position="4127"/>
    </location>
</feature>
<feature type="disulfide bond" evidence="1">
    <location>
        <begin position="4294"/>
        <end position="4320"/>
    </location>
</feature>
<feature type="disulfide bond" evidence="1">
    <location>
        <begin position="4325"/>
        <end position="4341"/>
    </location>
</feature>
<feature type="disulfide bond" evidence="1">
    <location>
        <begin position="4334"/>
        <end position="4350"/>
    </location>
</feature>
<feature type="disulfide bond" evidence="1">
    <location>
        <begin position="4352"/>
        <end position="4361"/>
    </location>
</feature>
<feature type="disulfide bond" evidence="1">
    <location>
        <begin position="4536"/>
        <end position="4569"/>
    </location>
</feature>
<feature type="sequence variant">
    <original>S</original>
    <variation>G</variation>
    <location>
        <position position="1229"/>
    </location>
</feature>
<feature type="sequence variant">
    <original>G</original>
    <variation>S</variation>
    <location>
        <position position="1233"/>
    </location>
</feature>
<feature type="mutagenesis site" description="Blocks ability of fj to enhance binding to ds." evidence="16">
    <original>S</original>
    <variation>A</variation>
    <variation>D</variation>
    <location>
        <position position="273"/>
    </location>
</feature>
<feature type="mutagenesis site" description="In ft61; strong overgrowth of eye imaginal disks. Binding to Fbxl7 is not affected." evidence="18">
    <original>T</original>
    <variation>I</variation>
    <location>
        <position position="4854"/>
    </location>
</feature>
<feature type="sequence conflict" description="In Ref. 1; AAA28530." evidence="20" ref="1">
    <original>S</original>
    <variation>P</variation>
    <location>
        <position position="676"/>
    </location>
</feature>
<feature type="sequence conflict" description="In Ref. 1; AAA28530." evidence="20" ref="1">
    <original>A</original>
    <variation>T</variation>
    <location>
        <position position="718"/>
    </location>
</feature>
<feature type="sequence conflict" description="In Ref. 1; AAA28530." evidence="20" ref="1">
    <original>T</original>
    <variation>S</variation>
    <location>
        <position position="889"/>
    </location>
</feature>
<feature type="sequence conflict" description="In Ref. 1; AAA28530." evidence="20" ref="1">
    <original>T</original>
    <variation>M</variation>
    <location>
        <position position="1298"/>
    </location>
</feature>
<feature type="sequence conflict" description="In Ref. 1; AAA28530." evidence="20" ref="1">
    <original>G</original>
    <variation>A</variation>
    <location>
        <position position="1338"/>
    </location>
</feature>
<feature type="sequence conflict" description="In Ref. 1; AAA28530." evidence="20" ref="1">
    <original>S</original>
    <variation>T</variation>
    <location>
        <position position="1366"/>
    </location>
</feature>
<feature type="sequence conflict" description="In Ref. 1; AAA28530." evidence="20" ref="1">
    <original>A</original>
    <variation>G</variation>
    <location>
        <position position="1408"/>
    </location>
</feature>
<feature type="sequence conflict" description="In Ref. 1; AAA28530." evidence="20" ref="1">
    <original>T</original>
    <variation>V</variation>
    <location>
        <position position="1755"/>
    </location>
</feature>
<feature type="sequence conflict" description="In Ref. 1; AAA28530." evidence="20" ref="1">
    <original>I</original>
    <variation>V</variation>
    <location>
        <position position="2168"/>
    </location>
</feature>
<feature type="sequence conflict" description="In Ref. 1; AAA28530." evidence="20" ref="1">
    <original>I</original>
    <variation>V</variation>
    <location>
        <position position="2266"/>
    </location>
</feature>
<feature type="sequence conflict" description="In Ref. 1; AAA28530." evidence="20" ref="1">
    <original>H</original>
    <variation>T</variation>
    <location>
        <position position="2665"/>
    </location>
</feature>
<feature type="sequence conflict" description="In Ref. 1; AAA28530." evidence="20" ref="1">
    <original>A</original>
    <variation>T</variation>
    <location>
        <position position="2712"/>
    </location>
</feature>
<feature type="sequence conflict" description="In Ref. 1; AAA28530." evidence="20" ref="1">
    <original>N</original>
    <variation>T</variation>
    <location>
        <position position="2816"/>
    </location>
</feature>
<feature type="sequence conflict" description="In Ref. 1; AAA28530." evidence="20" ref="1">
    <original>M</original>
    <variation>L</variation>
    <location>
        <position position="2893"/>
    </location>
</feature>
<feature type="sequence conflict" description="In Ref. 1; AAA28530." evidence="20" ref="1">
    <original>A</original>
    <variation>T</variation>
    <location>
        <position position="3359"/>
    </location>
</feature>
<feature type="sequence conflict" description="In Ref. 1; AAA28530." evidence="20" ref="1">
    <original>I</original>
    <variation>M</variation>
    <location>
        <position position="3674"/>
    </location>
</feature>
<feature type="sequence conflict" description="In Ref. 1; AAA28530." evidence="20" ref="1">
    <original>I</original>
    <variation>V</variation>
    <location>
        <position position="3722"/>
    </location>
</feature>
<feature type="sequence conflict" description="In Ref. 1; AAA28530." evidence="20" ref="1">
    <original>Y</original>
    <variation>N</variation>
    <location>
        <position position="3869"/>
    </location>
</feature>
<feature type="sequence conflict" description="In Ref. 1; AAA28530." evidence="20" ref="1">
    <original>G</original>
    <variation>D</variation>
    <location>
        <position position="4187"/>
    </location>
</feature>
<feature type="sequence conflict" description="In Ref. 1; AAA28530." evidence="20" ref="1">
    <original>L</original>
    <variation>S</variation>
    <location>
        <position position="4309"/>
    </location>
</feature>
<name>FAT_DROME</name>
<proteinExistence type="evidence at protein level"/>